<comment type="function">
    <text evidence="1 3">Involved in DNA damage recognition. Binds DNA containing O(6)-methylguanine (PubMed:20212037). Binds to the damaged base and flips the base out of the DNA duplex into an extrahelical conformation, which allows processing by repair proteins (By similarity).</text>
</comment>
<comment type="similarity">
    <text evidence="5">Belongs to the MGMT family. ATL subfamily.</text>
</comment>
<gene>
    <name evidence="6" type="ORF">A79_1377</name>
    <name evidence="7" type="ORF">D030_1023</name>
</gene>
<reference key="1">
    <citation type="submission" date="2007-01" db="EMBL/GenBank/DDBJ databases">
        <title>Annotation of Vibrio parahaemolyticus AQ3810.</title>
        <authorList>
            <person name="Heidelberg J."/>
            <person name="Sebastian Y."/>
        </authorList>
    </citation>
    <scope>NUCLEOTIDE SEQUENCE [LARGE SCALE GENOMIC DNA]</scope>
    <source>
        <strain>AQ3810</strain>
    </source>
</reference>
<reference key="2">
    <citation type="submission" date="2013-12" db="EMBL/GenBank/DDBJ databases">
        <authorList>
            <person name="Eppinger M."/>
            <person name="Hasan N.A."/>
            <person name="Sengamalay N."/>
            <person name="Hine E."/>
            <person name="Su Q."/>
            <person name="Daugherty S.C."/>
            <person name="Choi S.Y."/>
            <person name="Sadzewicz L."/>
            <person name="Tallon L."/>
            <person name="Cebula T.A."/>
            <person name="Ravel J."/>
            <person name="Colwell R.R."/>
        </authorList>
    </citation>
    <scope>NUCLEOTIDE SEQUENCE [LARGE SCALE GENOMIC DNA]</scope>
    <source>
        <strain>AQ3810</strain>
    </source>
</reference>
<reference key="3">
    <citation type="journal article" date="2010" name="J. Biol. Chem.">
        <title>Structural basis of O6-alkylguanine recognition by a bacterial alkyltransferase-like DNA repair protein.</title>
        <authorList>
            <person name="Aramini J.M."/>
            <person name="Tubbs J.L."/>
            <person name="Kanugula S."/>
            <person name="Rossi P."/>
            <person name="Ertekin A."/>
            <person name="Maglaqui M."/>
            <person name="Hamilton K."/>
            <person name="Ciccosanti C.T."/>
            <person name="Jiang M."/>
            <person name="Xiao R."/>
            <person name="Soong T.T."/>
            <person name="Rost B."/>
            <person name="Acton T.B."/>
            <person name="Everett J.K."/>
            <person name="Pegg A.E."/>
            <person name="Tainer J.A."/>
            <person name="Montelione G.T."/>
        </authorList>
    </citation>
    <scope>STRUCTURE BY NMR</scope>
    <scope>FUNCTION</scope>
    <scope>MUTAGENESIS OF TYR-23; ARG-37 AND TRP-54</scope>
</reference>
<name>ATL_VIBPQ</name>
<proteinExistence type="evidence at protein level"/>
<evidence type="ECO:0000250" key="1">
    <source>
        <dbReference type="UniProtKB" id="P0AFP2"/>
    </source>
</evidence>
<evidence type="ECO:0000250" key="2">
    <source>
        <dbReference type="UniProtKB" id="Q9UTN9"/>
    </source>
</evidence>
<evidence type="ECO:0000269" key="3">
    <source>
    </source>
</evidence>
<evidence type="ECO:0000303" key="4">
    <source>
    </source>
</evidence>
<evidence type="ECO:0000305" key="5"/>
<evidence type="ECO:0000312" key="6">
    <source>
        <dbReference type="EMBL" id="EDM58796.1"/>
    </source>
</evidence>
<evidence type="ECO:0000312" key="7">
    <source>
        <dbReference type="EMBL" id="EXF71745.1"/>
    </source>
</evidence>
<evidence type="ECO:0007829" key="8">
    <source>
        <dbReference type="PDB" id="2KIF"/>
    </source>
</evidence>
<evidence type="ECO:0007829" key="9">
    <source>
        <dbReference type="PDB" id="2KIM"/>
    </source>
</evidence>
<dbReference type="EMBL" id="AAWQ01000051">
    <property type="protein sequence ID" value="EDM58796.1"/>
    <property type="molecule type" value="Genomic_DNA"/>
</dbReference>
<dbReference type="EMBL" id="AZJP01000183">
    <property type="protein sequence ID" value="EXF71745.1"/>
    <property type="molecule type" value="Genomic_DNA"/>
</dbReference>
<dbReference type="RefSeq" id="WP_005461131.1">
    <property type="nucleotide sequence ID" value="NZ_KK073771.1"/>
</dbReference>
<dbReference type="PDB" id="2KIF">
    <property type="method" value="NMR"/>
    <property type="chains" value="A=1-100"/>
</dbReference>
<dbReference type="PDB" id="2KIM">
    <property type="method" value="NMR"/>
    <property type="chains" value="A=1-100"/>
</dbReference>
<dbReference type="PDBsum" id="2KIF"/>
<dbReference type="PDBsum" id="2KIM"/>
<dbReference type="BMRB" id="A6B4U8"/>
<dbReference type="SMR" id="A6B4U8"/>
<dbReference type="PATRIC" id="fig|419109.25.peg.1095"/>
<dbReference type="HOGENOM" id="CLU_000445_52_5_6"/>
<dbReference type="EvolutionaryTrace" id="A6B4U8"/>
<dbReference type="GO" id="GO:0003824">
    <property type="term" value="F:catalytic activity"/>
    <property type="evidence" value="ECO:0007669"/>
    <property type="project" value="InterPro"/>
</dbReference>
<dbReference type="GO" id="GO:0003677">
    <property type="term" value="F:DNA binding"/>
    <property type="evidence" value="ECO:0007669"/>
    <property type="project" value="UniProtKB-KW"/>
</dbReference>
<dbReference type="GO" id="GO:0006281">
    <property type="term" value="P:DNA repair"/>
    <property type="evidence" value="ECO:0007669"/>
    <property type="project" value="InterPro"/>
</dbReference>
<dbReference type="CDD" id="cd06445">
    <property type="entry name" value="ATase"/>
    <property type="match status" value="1"/>
</dbReference>
<dbReference type="Gene3D" id="1.10.10.10">
    <property type="entry name" value="Winged helix-like DNA-binding domain superfamily/Winged helix DNA-binding domain"/>
    <property type="match status" value="1"/>
</dbReference>
<dbReference type="InterPro" id="IPR052520">
    <property type="entry name" value="ATL_DNA_repair"/>
</dbReference>
<dbReference type="InterPro" id="IPR014048">
    <property type="entry name" value="MethylDNA_cys_MeTrfase_DNA-bd"/>
</dbReference>
<dbReference type="InterPro" id="IPR036217">
    <property type="entry name" value="MethylDNA_cys_MeTrfase_DNAb"/>
</dbReference>
<dbReference type="InterPro" id="IPR036388">
    <property type="entry name" value="WH-like_DNA-bd_sf"/>
</dbReference>
<dbReference type="PANTHER" id="PTHR42942">
    <property type="entry name" value="6-O-METHYLGUANINE DNA METHYLTRANSFERASE"/>
    <property type="match status" value="1"/>
</dbReference>
<dbReference type="PANTHER" id="PTHR42942:SF1">
    <property type="entry name" value="ALKYLTRANSFERASE-LIKE PROTEIN 1"/>
    <property type="match status" value="1"/>
</dbReference>
<dbReference type="Pfam" id="PF01035">
    <property type="entry name" value="DNA_binding_1"/>
    <property type="match status" value="1"/>
</dbReference>
<dbReference type="SUPFAM" id="SSF46767">
    <property type="entry name" value="Methylated DNA-protein cysteine methyltransferase, C-terminal domain"/>
    <property type="match status" value="1"/>
</dbReference>
<keyword id="KW-0002">3D-structure</keyword>
<keyword id="KW-0227">DNA damage</keyword>
<keyword id="KW-0238">DNA-binding</keyword>
<organism>
    <name type="scientific">Vibrio parahaemolyticus serotype O3:K6 (strain AQ3810)</name>
    <dbReference type="NCBI Taxonomy" id="419109"/>
    <lineage>
        <taxon>Bacteria</taxon>
        <taxon>Pseudomonadati</taxon>
        <taxon>Pseudomonadota</taxon>
        <taxon>Gammaproteobacteria</taxon>
        <taxon>Vibrionales</taxon>
        <taxon>Vibrionaceae</taxon>
        <taxon>Vibrio</taxon>
    </lineage>
</organism>
<protein>
    <recommendedName>
        <fullName evidence="1">DNA base-flipping protein</fullName>
    </recommendedName>
    <alternativeName>
        <fullName evidence="1">Alkyltransferase-like protein ATL</fullName>
    </alternativeName>
    <alternativeName>
        <fullName evidence="4">vpAtl</fullName>
    </alternativeName>
</protein>
<accession>A6B4U8</accession>
<sequence>MDQFLVQIFAVIHQIPKGKVSTYGEIAKMAGYPGYARHVGKALGNLPEGSKLPWFRVINSQGKISLKGRDLDRQKQKLEAEGIEVSEIGKIALRKYKWQP</sequence>
<feature type="chain" id="PRO_0000432552" description="DNA base-flipping protein">
    <location>
        <begin position="1"/>
        <end position="100"/>
    </location>
</feature>
<feature type="site" description="Required for phosphate rotation/nucleotide flipping" evidence="2">
    <location>
        <position position="23"/>
    </location>
</feature>
<feature type="site" description="Arg finger, required for nucleotide flipping" evidence="2">
    <location>
        <position position="37"/>
    </location>
</feature>
<feature type="mutagenesis site" description="Severely impairs ability to bind alkylated DNA." evidence="3">
    <original>Y</original>
    <variation>A</variation>
    <location>
        <position position="23"/>
    </location>
</feature>
<feature type="mutagenesis site" description="Slightly impairs ability to bind alkylated DNA." evidence="3">
    <original>Y</original>
    <variation>F</variation>
    <location>
        <position position="23"/>
    </location>
</feature>
<feature type="mutagenesis site" description="Severely impairs ability to bind alkylated DNA." evidence="3">
    <original>R</original>
    <variation>A</variation>
    <location>
        <position position="37"/>
    </location>
</feature>
<feature type="mutagenesis site" description="Exhibits some affinity for methylated DNA." evidence="3">
    <original>W</original>
    <variation>A</variation>
    <location>
        <position position="54"/>
    </location>
</feature>
<feature type="helix" evidence="8">
    <location>
        <begin position="3"/>
        <end position="12"/>
    </location>
</feature>
<feature type="strand" evidence="8">
    <location>
        <begin position="20"/>
        <end position="22"/>
    </location>
</feature>
<feature type="helix" evidence="8">
    <location>
        <begin position="23"/>
        <end position="30"/>
    </location>
</feature>
<feature type="helix" evidence="8">
    <location>
        <begin position="36"/>
        <end position="45"/>
    </location>
</feature>
<feature type="helix" evidence="9">
    <location>
        <begin position="54"/>
        <end position="56"/>
    </location>
</feature>
<feature type="helix" evidence="8">
    <location>
        <begin position="69"/>
        <end position="79"/>
    </location>
</feature>
<feature type="turn" evidence="8">
    <location>
        <begin position="80"/>
        <end position="82"/>
    </location>
</feature>
<feature type="turn" evidence="8">
    <location>
        <begin position="87"/>
        <end position="89"/>
    </location>
</feature>
<feature type="helix" evidence="8">
    <location>
        <begin position="93"/>
        <end position="96"/>
    </location>
</feature>